<dbReference type="EC" id="2.5.1.145" evidence="1"/>
<dbReference type="EMBL" id="CP000124">
    <property type="protein sequence ID" value="ABA50180.1"/>
    <property type="molecule type" value="Genomic_DNA"/>
</dbReference>
<dbReference type="RefSeq" id="WP_004191241.1">
    <property type="nucleotide sequence ID" value="NC_007434.1"/>
</dbReference>
<dbReference type="SMR" id="Q3JV10"/>
<dbReference type="EnsemblBacteria" id="ABA50180">
    <property type="protein sequence ID" value="ABA50180"/>
    <property type="gene ID" value="BURPS1710b_1182"/>
</dbReference>
<dbReference type="GeneID" id="93059470"/>
<dbReference type="KEGG" id="bpm:BURPS1710b_1182"/>
<dbReference type="HOGENOM" id="CLU_013386_1_0_4"/>
<dbReference type="UniPathway" id="UPA00664"/>
<dbReference type="Proteomes" id="UP000002700">
    <property type="component" value="Chromosome I"/>
</dbReference>
<dbReference type="GO" id="GO:0005886">
    <property type="term" value="C:plasma membrane"/>
    <property type="evidence" value="ECO:0007669"/>
    <property type="project" value="UniProtKB-SubCell"/>
</dbReference>
<dbReference type="GO" id="GO:0008961">
    <property type="term" value="F:phosphatidylglycerol-prolipoprotein diacylglyceryl transferase activity"/>
    <property type="evidence" value="ECO:0007669"/>
    <property type="project" value="UniProtKB-UniRule"/>
</dbReference>
<dbReference type="GO" id="GO:0042158">
    <property type="term" value="P:lipoprotein biosynthetic process"/>
    <property type="evidence" value="ECO:0007669"/>
    <property type="project" value="UniProtKB-UniRule"/>
</dbReference>
<dbReference type="HAMAP" id="MF_01147">
    <property type="entry name" value="Lgt"/>
    <property type="match status" value="1"/>
</dbReference>
<dbReference type="InterPro" id="IPR001640">
    <property type="entry name" value="Lgt"/>
</dbReference>
<dbReference type="NCBIfam" id="TIGR00544">
    <property type="entry name" value="lgt"/>
    <property type="match status" value="1"/>
</dbReference>
<dbReference type="PANTHER" id="PTHR30589:SF0">
    <property type="entry name" value="PHOSPHATIDYLGLYCEROL--PROLIPOPROTEIN DIACYLGLYCERYL TRANSFERASE"/>
    <property type="match status" value="1"/>
</dbReference>
<dbReference type="PANTHER" id="PTHR30589">
    <property type="entry name" value="PROLIPOPROTEIN DIACYLGLYCERYL TRANSFERASE"/>
    <property type="match status" value="1"/>
</dbReference>
<dbReference type="Pfam" id="PF01790">
    <property type="entry name" value="LGT"/>
    <property type="match status" value="1"/>
</dbReference>
<dbReference type="PROSITE" id="PS01311">
    <property type="entry name" value="LGT"/>
    <property type="match status" value="1"/>
</dbReference>
<protein>
    <recommendedName>
        <fullName evidence="1">Phosphatidylglycerol--prolipoprotein diacylglyceryl transferase</fullName>
        <ecNumber evidence="1">2.5.1.145</ecNumber>
    </recommendedName>
</protein>
<gene>
    <name evidence="1" type="primary">lgt</name>
    <name type="ordered locus">BURPS1710b_1182</name>
</gene>
<reference key="1">
    <citation type="journal article" date="2010" name="Genome Biol. Evol.">
        <title>Continuing evolution of Burkholderia mallei through genome reduction and large-scale rearrangements.</title>
        <authorList>
            <person name="Losada L."/>
            <person name="Ronning C.M."/>
            <person name="DeShazer D."/>
            <person name="Woods D."/>
            <person name="Fedorova N."/>
            <person name="Kim H.S."/>
            <person name="Shabalina S.A."/>
            <person name="Pearson T.R."/>
            <person name="Brinkac L."/>
            <person name="Tan P."/>
            <person name="Nandi T."/>
            <person name="Crabtree J."/>
            <person name="Badger J."/>
            <person name="Beckstrom-Sternberg S."/>
            <person name="Saqib M."/>
            <person name="Schutzer S.E."/>
            <person name="Keim P."/>
            <person name="Nierman W.C."/>
        </authorList>
    </citation>
    <scope>NUCLEOTIDE SEQUENCE [LARGE SCALE GENOMIC DNA]</scope>
    <source>
        <strain>1710b</strain>
    </source>
</reference>
<proteinExistence type="inferred from homology"/>
<accession>Q3JV10</accession>
<comment type="function">
    <text evidence="1">Catalyzes the transfer of the diacylglyceryl group from phosphatidylglycerol to the sulfhydryl group of the N-terminal cysteine of a prolipoprotein, the first step in the formation of mature lipoproteins.</text>
</comment>
<comment type="catalytic activity">
    <reaction evidence="1">
        <text>L-cysteinyl-[prolipoprotein] + a 1,2-diacyl-sn-glycero-3-phospho-(1'-sn-glycerol) = an S-1,2-diacyl-sn-glyceryl-L-cysteinyl-[prolipoprotein] + sn-glycerol 1-phosphate + H(+)</text>
        <dbReference type="Rhea" id="RHEA:56712"/>
        <dbReference type="Rhea" id="RHEA-COMP:14679"/>
        <dbReference type="Rhea" id="RHEA-COMP:14680"/>
        <dbReference type="ChEBI" id="CHEBI:15378"/>
        <dbReference type="ChEBI" id="CHEBI:29950"/>
        <dbReference type="ChEBI" id="CHEBI:57685"/>
        <dbReference type="ChEBI" id="CHEBI:64716"/>
        <dbReference type="ChEBI" id="CHEBI:140658"/>
        <dbReference type="EC" id="2.5.1.145"/>
    </reaction>
</comment>
<comment type="pathway">
    <text evidence="1">Protein modification; lipoprotein biosynthesis (diacylglyceryl transfer).</text>
</comment>
<comment type="subcellular location">
    <subcellularLocation>
        <location evidence="1">Cell inner membrane</location>
        <topology evidence="1">Multi-pass membrane protein</topology>
    </subcellularLocation>
</comment>
<comment type="similarity">
    <text evidence="1">Belongs to the Lgt family.</text>
</comment>
<name>LGT_BURP1</name>
<organism>
    <name type="scientific">Burkholderia pseudomallei (strain 1710b)</name>
    <dbReference type="NCBI Taxonomy" id="320372"/>
    <lineage>
        <taxon>Bacteria</taxon>
        <taxon>Pseudomonadati</taxon>
        <taxon>Pseudomonadota</taxon>
        <taxon>Betaproteobacteria</taxon>
        <taxon>Burkholderiales</taxon>
        <taxon>Burkholderiaceae</taxon>
        <taxon>Burkholderia</taxon>
        <taxon>pseudomallei group</taxon>
    </lineage>
</organism>
<sequence length="296" mass="33095">MIIHPNFDPVAIHLGPLAVRWYGLMYLVGFILAIVVGRLRLKLPHVAAQGWSAKDIDDMMFYGVLGVVLGGRLGYVLFYKAGYYFSHPLDIFRVWEGGMSFHGGFLGVTLAMALFAWQRKRHWLEVTDFVAPMVPTGLAAGRLGNFINGELWGRVTSPDAPWAMLFPGASRDDAAWLAAHQDIAAKWNLNEVFLSHQMLPRHPSQLYEIALEGIALFFVLWFFSRKPRPMGAISALFLIGYGAARFTVEFAREPDDFLGLLTFGLSMGQWLSLPMIVAGVLMMIWAYRRGGVAKQA</sequence>
<keyword id="KW-0997">Cell inner membrane</keyword>
<keyword id="KW-1003">Cell membrane</keyword>
<keyword id="KW-0472">Membrane</keyword>
<keyword id="KW-0808">Transferase</keyword>
<keyword id="KW-0812">Transmembrane</keyword>
<keyword id="KW-1133">Transmembrane helix</keyword>
<evidence type="ECO:0000255" key="1">
    <source>
        <dbReference type="HAMAP-Rule" id="MF_01147"/>
    </source>
</evidence>
<feature type="chain" id="PRO_1000053403" description="Phosphatidylglycerol--prolipoprotein diacylglyceryl transferase">
    <location>
        <begin position="1"/>
        <end position="296"/>
    </location>
</feature>
<feature type="transmembrane region" description="Helical" evidence="1">
    <location>
        <begin position="17"/>
        <end position="37"/>
    </location>
</feature>
<feature type="transmembrane region" description="Helical" evidence="1">
    <location>
        <begin position="59"/>
        <end position="79"/>
    </location>
</feature>
<feature type="transmembrane region" description="Helical" evidence="1">
    <location>
        <begin position="97"/>
        <end position="117"/>
    </location>
</feature>
<feature type="transmembrane region" description="Helical" evidence="1">
    <location>
        <begin position="230"/>
        <end position="250"/>
    </location>
</feature>
<feature type="transmembrane region" description="Helical" evidence="1">
    <location>
        <begin position="265"/>
        <end position="285"/>
    </location>
</feature>
<feature type="binding site" evidence="1">
    <location>
        <position position="142"/>
    </location>
    <ligand>
        <name>a 1,2-diacyl-sn-glycero-3-phospho-(1'-sn-glycerol)</name>
        <dbReference type="ChEBI" id="CHEBI:64716"/>
    </ligand>
</feature>